<proteinExistence type="inferred from homology"/>
<reference key="1">
    <citation type="submission" date="2008-10" db="EMBL/GenBank/DDBJ databases">
        <title>Genome sequence of Bacillus cereus AH820.</title>
        <authorList>
            <person name="Dodson R.J."/>
            <person name="Durkin A.S."/>
            <person name="Rosovitz M.J."/>
            <person name="Rasko D.A."/>
            <person name="Hoffmaster A."/>
            <person name="Ravel J."/>
            <person name="Sutton G."/>
        </authorList>
    </citation>
    <scope>NUCLEOTIDE SEQUENCE [LARGE SCALE GENOMIC DNA]</scope>
    <source>
        <strain>AH820</strain>
    </source>
</reference>
<keyword id="KW-0004">4Fe-4S</keyword>
<keyword id="KW-0408">Iron</keyword>
<keyword id="KW-0411">Iron-sulfur</keyword>
<keyword id="KW-0414">Isoprene biosynthesis</keyword>
<keyword id="KW-0479">Metal-binding</keyword>
<keyword id="KW-0560">Oxidoreductase</keyword>
<feature type="chain" id="PRO_1000118162" description="4-hydroxy-3-methylbut-2-en-1-yl diphosphate synthase (flavodoxin)">
    <location>
        <begin position="1"/>
        <end position="370"/>
    </location>
</feature>
<feature type="binding site" evidence="1">
    <location>
        <position position="268"/>
    </location>
    <ligand>
        <name>[4Fe-4S] cluster</name>
        <dbReference type="ChEBI" id="CHEBI:49883"/>
    </ligand>
</feature>
<feature type="binding site" evidence="1">
    <location>
        <position position="271"/>
    </location>
    <ligand>
        <name>[4Fe-4S] cluster</name>
        <dbReference type="ChEBI" id="CHEBI:49883"/>
    </ligand>
</feature>
<feature type="binding site" evidence="1">
    <location>
        <position position="303"/>
    </location>
    <ligand>
        <name>[4Fe-4S] cluster</name>
        <dbReference type="ChEBI" id="CHEBI:49883"/>
    </ligand>
</feature>
<feature type="binding site" evidence="1">
    <location>
        <position position="310"/>
    </location>
    <ligand>
        <name>[4Fe-4S] cluster</name>
        <dbReference type="ChEBI" id="CHEBI:49883"/>
    </ligand>
</feature>
<evidence type="ECO:0000255" key="1">
    <source>
        <dbReference type="HAMAP-Rule" id="MF_00159"/>
    </source>
</evidence>
<dbReference type="EC" id="1.17.7.3" evidence="1"/>
<dbReference type="EMBL" id="CP001283">
    <property type="protein sequence ID" value="ACK87719.1"/>
    <property type="molecule type" value="Genomic_DNA"/>
</dbReference>
<dbReference type="SMR" id="B7JN03"/>
<dbReference type="KEGG" id="bcu:BCAH820_4300"/>
<dbReference type="HOGENOM" id="CLU_042258_0_0_9"/>
<dbReference type="UniPathway" id="UPA00056">
    <property type="reaction ID" value="UER00096"/>
</dbReference>
<dbReference type="Proteomes" id="UP000001363">
    <property type="component" value="Chromosome"/>
</dbReference>
<dbReference type="GO" id="GO:0051539">
    <property type="term" value="F:4 iron, 4 sulfur cluster binding"/>
    <property type="evidence" value="ECO:0007669"/>
    <property type="project" value="UniProtKB-UniRule"/>
</dbReference>
<dbReference type="GO" id="GO:0046429">
    <property type="term" value="F:4-hydroxy-3-methylbut-2-en-1-yl diphosphate synthase activity (ferredoxin)"/>
    <property type="evidence" value="ECO:0007669"/>
    <property type="project" value="UniProtKB-UniRule"/>
</dbReference>
<dbReference type="GO" id="GO:0141197">
    <property type="term" value="F:4-hydroxy-3-methylbut-2-enyl-diphosphate synthase activity (flavodoxin)"/>
    <property type="evidence" value="ECO:0007669"/>
    <property type="project" value="UniProtKB-EC"/>
</dbReference>
<dbReference type="GO" id="GO:0005506">
    <property type="term" value="F:iron ion binding"/>
    <property type="evidence" value="ECO:0007669"/>
    <property type="project" value="InterPro"/>
</dbReference>
<dbReference type="GO" id="GO:0019288">
    <property type="term" value="P:isopentenyl diphosphate biosynthetic process, methylerythritol 4-phosphate pathway"/>
    <property type="evidence" value="ECO:0007669"/>
    <property type="project" value="UniProtKB-UniRule"/>
</dbReference>
<dbReference type="GO" id="GO:0016114">
    <property type="term" value="P:terpenoid biosynthetic process"/>
    <property type="evidence" value="ECO:0007669"/>
    <property type="project" value="InterPro"/>
</dbReference>
<dbReference type="FunFam" id="3.20.20.20:FF:000001">
    <property type="entry name" value="4-hydroxy-3-methylbut-2-en-1-yl diphosphate synthase (flavodoxin)"/>
    <property type="match status" value="1"/>
</dbReference>
<dbReference type="FunFam" id="3.30.413.10:FF:000005">
    <property type="entry name" value="4-hydroxy-3-methylbut-2-en-1-yl diphosphate synthase (flavodoxin)"/>
    <property type="match status" value="1"/>
</dbReference>
<dbReference type="Gene3D" id="3.20.20.20">
    <property type="entry name" value="Dihydropteroate synthase-like"/>
    <property type="match status" value="1"/>
</dbReference>
<dbReference type="Gene3D" id="3.30.413.10">
    <property type="entry name" value="Sulfite Reductase Hemoprotein, domain 1"/>
    <property type="match status" value="1"/>
</dbReference>
<dbReference type="HAMAP" id="MF_00159">
    <property type="entry name" value="IspG"/>
    <property type="match status" value="1"/>
</dbReference>
<dbReference type="InterPro" id="IPR011005">
    <property type="entry name" value="Dihydropteroate_synth-like_sf"/>
</dbReference>
<dbReference type="InterPro" id="IPR016425">
    <property type="entry name" value="IspG_bac"/>
</dbReference>
<dbReference type="InterPro" id="IPR004588">
    <property type="entry name" value="IspG_bac-typ"/>
</dbReference>
<dbReference type="InterPro" id="IPR045854">
    <property type="entry name" value="NO2/SO3_Rdtase_4Fe4S_sf"/>
</dbReference>
<dbReference type="NCBIfam" id="TIGR00612">
    <property type="entry name" value="ispG_gcpE"/>
    <property type="match status" value="1"/>
</dbReference>
<dbReference type="NCBIfam" id="NF001540">
    <property type="entry name" value="PRK00366.1"/>
    <property type="match status" value="1"/>
</dbReference>
<dbReference type="PANTHER" id="PTHR30454">
    <property type="entry name" value="4-HYDROXY-3-METHYLBUT-2-EN-1-YL DIPHOSPHATE SYNTHASE"/>
    <property type="match status" value="1"/>
</dbReference>
<dbReference type="PANTHER" id="PTHR30454:SF0">
    <property type="entry name" value="4-HYDROXY-3-METHYLBUT-2-EN-1-YL DIPHOSPHATE SYNTHASE (FERREDOXIN), CHLOROPLASTIC"/>
    <property type="match status" value="1"/>
</dbReference>
<dbReference type="Pfam" id="PF04551">
    <property type="entry name" value="GcpE"/>
    <property type="match status" value="1"/>
</dbReference>
<dbReference type="PIRSF" id="PIRSF004640">
    <property type="entry name" value="IspG"/>
    <property type="match status" value="1"/>
</dbReference>
<dbReference type="SUPFAM" id="SSF51717">
    <property type="entry name" value="Dihydropteroate synthetase-like"/>
    <property type="match status" value="1"/>
</dbReference>
<dbReference type="SUPFAM" id="SSF56014">
    <property type="entry name" value="Nitrite and sulphite reductase 4Fe-4S domain-like"/>
    <property type="match status" value="1"/>
</dbReference>
<comment type="function">
    <text evidence="1">Converts 2C-methyl-D-erythritol 2,4-cyclodiphosphate (ME-2,4cPP) into 1-hydroxy-2-methyl-2-(E)-butenyl 4-diphosphate.</text>
</comment>
<comment type="catalytic activity">
    <reaction evidence="1">
        <text>(2E)-4-hydroxy-3-methylbut-2-enyl diphosphate + oxidized [flavodoxin] + H2O + 2 H(+) = 2-C-methyl-D-erythritol 2,4-cyclic diphosphate + reduced [flavodoxin]</text>
        <dbReference type="Rhea" id="RHEA:43604"/>
        <dbReference type="Rhea" id="RHEA-COMP:10622"/>
        <dbReference type="Rhea" id="RHEA-COMP:10623"/>
        <dbReference type="ChEBI" id="CHEBI:15377"/>
        <dbReference type="ChEBI" id="CHEBI:15378"/>
        <dbReference type="ChEBI" id="CHEBI:57618"/>
        <dbReference type="ChEBI" id="CHEBI:58210"/>
        <dbReference type="ChEBI" id="CHEBI:58483"/>
        <dbReference type="ChEBI" id="CHEBI:128753"/>
        <dbReference type="EC" id="1.17.7.3"/>
    </reaction>
</comment>
<comment type="cofactor">
    <cofactor evidence="1">
        <name>[4Fe-4S] cluster</name>
        <dbReference type="ChEBI" id="CHEBI:49883"/>
    </cofactor>
    <text evidence="1">Binds 1 [4Fe-4S] cluster.</text>
</comment>
<comment type="pathway">
    <text evidence="1">Isoprenoid biosynthesis; isopentenyl diphosphate biosynthesis via DXP pathway; isopentenyl diphosphate from 1-deoxy-D-xylulose 5-phosphate: step 5/6.</text>
</comment>
<comment type="similarity">
    <text evidence="1">Belongs to the IspG family.</text>
</comment>
<accession>B7JN03</accession>
<name>ISPG_BACC0</name>
<gene>
    <name evidence="1" type="primary">ispG</name>
    <name type="ordered locus">BCAH820_4300</name>
</gene>
<protein>
    <recommendedName>
        <fullName evidence="1">4-hydroxy-3-methylbut-2-en-1-yl diphosphate synthase (flavodoxin)</fullName>
        <ecNumber evidence="1">1.17.7.3</ecNumber>
    </recommendedName>
    <alternativeName>
        <fullName evidence="1">1-hydroxy-2-methyl-2-(E)-butenyl 4-diphosphate synthase</fullName>
    </alternativeName>
</protein>
<organism>
    <name type="scientific">Bacillus cereus (strain AH820)</name>
    <dbReference type="NCBI Taxonomy" id="405535"/>
    <lineage>
        <taxon>Bacteria</taxon>
        <taxon>Bacillati</taxon>
        <taxon>Bacillota</taxon>
        <taxon>Bacilli</taxon>
        <taxon>Bacillales</taxon>
        <taxon>Bacillaceae</taxon>
        <taxon>Bacillus</taxon>
        <taxon>Bacillus cereus group</taxon>
    </lineage>
</organism>
<sequence>MNEMTHRTKTRPVKVGNLTIGGNNELIIQSMTTTKTHDVEATVAEIKRLEEAGCQVVRVAVPDERAANAIADIKKQINIPLVADIHFDYRLALKAIEGGIDKVRINPGNIGRRHKVEAVVNAAKERGIPIRIGVNAGSLERHILEKYGYPTADGMVESALHHIKILEDLDFHDIIVSMKASDVNLAIEAYEKAARAFDYPLHLGITESGTLFAGTVKSAAGLGAILNKGIGNTLRISLSADPVEEVKVARELLKSFGLASNAATLISCPTCGRIEIDLISIANEVEEYISTLQVPIKVAVLGCAVNGPGEAREADIGIAGARGEGLLFRKGQVVRKVPEEIMVEELKKEIDVIAAEMAAEREKEKETQEQ</sequence>